<dbReference type="EC" id="6.3.5.7" evidence="1"/>
<dbReference type="EMBL" id="AE017333">
    <property type="protein sequence ID" value="AAU39666.1"/>
    <property type="molecule type" value="Genomic_DNA"/>
</dbReference>
<dbReference type="EMBL" id="CP000002">
    <property type="protein sequence ID" value="AAU22316.1"/>
    <property type="molecule type" value="Genomic_DNA"/>
</dbReference>
<dbReference type="RefSeq" id="WP_003179591.1">
    <property type="nucleotide sequence ID" value="NC_006322.1"/>
</dbReference>
<dbReference type="SMR" id="Q65MP8"/>
<dbReference type="STRING" id="279010.BL00601"/>
<dbReference type="GeneID" id="92862688"/>
<dbReference type="KEGG" id="bld:BLi00731"/>
<dbReference type="KEGG" id="bli:BL00601"/>
<dbReference type="eggNOG" id="COG0154">
    <property type="taxonomic scope" value="Bacteria"/>
</dbReference>
<dbReference type="HOGENOM" id="CLU_009600_0_3_9"/>
<dbReference type="Proteomes" id="UP000000606">
    <property type="component" value="Chromosome"/>
</dbReference>
<dbReference type="GO" id="GO:0030956">
    <property type="term" value="C:glutamyl-tRNA(Gln) amidotransferase complex"/>
    <property type="evidence" value="ECO:0007669"/>
    <property type="project" value="InterPro"/>
</dbReference>
<dbReference type="GO" id="GO:0005524">
    <property type="term" value="F:ATP binding"/>
    <property type="evidence" value="ECO:0007669"/>
    <property type="project" value="UniProtKB-KW"/>
</dbReference>
<dbReference type="GO" id="GO:0050567">
    <property type="term" value="F:glutaminyl-tRNA synthase (glutamine-hydrolyzing) activity"/>
    <property type="evidence" value="ECO:0007669"/>
    <property type="project" value="UniProtKB-UniRule"/>
</dbReference>
<dbReference type="GO" id="GO:0006412">
    <property type="term" value="P:translation"/>
    <property type="evidence" value="ECO:0007669"/>
    <property type="project" value="UniProtKB-UniRule"/>
</dbReference>
<dbReference type="Gene3D" id="3.90.1300.10">
    <property type="entry name" value="Amidase signature (AS) domain"/>
    <property type="match status" value="1"/>
</dbReference>
<dbReference type="HAMAP" id="MF_00120">
    <property type="entry name" value="GatA"/>
    <property type="match status" value="1"/>
</dbReference>
<dbReference type="InterPro" id="IPR000120">
    <property type="entry name" value="Amidase"/>
</dbReference>
<dbReference type="InterPro" id="IPR020556">
    <property type="entry name" value="Amidase_CS"/>
</dbReference>
<dbReference type="InterPro" id="IPR023631">
    <property type="entry name" value="Amidase_dom"/>
</dbReference>
<dbReference type="InterPro" id="IPR036928">
    <property type="entry name" value="AS_sf"/>
</dbReference>
<dbReference type="InterPro" id="IPR004412">
    <property type="entry name" value="GatA"/>
</dbReference>
<dbReference type="NCBIfam" id="TIGR00132">
    <property type="entry name" value="gatA"/>
    <property type="match status" value="1"/>
</dbReference>
<dbReference type="PANTHER" id="PTHR11895:SF151">
    <property type="entry name" value="GLUTAMYL-TRNA(GLN) AMIDOTRANSFERASE SUBUNIT A"/>
    <property type="match status" value="1"/>
</dbReference>
<dbReference type="PANTHER" id="PTHR11895">
    <property type="entry name" value="TRANSAMIDASE"/>
    <property type="match status" value="1"/>
</dbReference>
<dbReference type="Pfam" id="PF01425">
    <property type="entry name" value="Amidase"/>
    <property type="match status" value="1"/>
</dbReference>
<dbReference type="SUPFAM" id="SSF75304">
    <property type="entry name" value="Amidase signature (AS) enzymes"/>
    <property type="match status" value="1"/>
</dbReference>
<dbReference type="PROSITE" id="PS00571">
    <property type="entry name" value="AMIDASES"/>
    <property type="match status" value="1"/>
</dbReference>
<organism>
    <name type="scientific">Bacillus licheniformis (strain ATCC 14580 / DSM 13 / JCM 2505 / CCUG 7422 / NBRC 12200 / NCIMB 9375 / NCTC 10341 / NRRL NRS-1264 / Gibson 46)</name>
    <dbReference type="NCBI Taxonomy" id="279010"/>
    <lineage>
        <taxon>Bacteria</taxon>
        <taxon>Bacillati</taxon>
        <taxon>Bacillota</taxon>
        <taxon>Bacilli</taxon>
        <taxon>Bacillales</taxon>
        <taxon>Bacillaceae</taxon>
        <taxon>Bacillus</taxon>
    </lineage>
</organism>
<gene>
    <name evidence="1" type="primary">gatA</name>
    <name type="ordered locus">BLi00731</name>
    <name type="ordered locus">BL00601</name>
</gene>
<protein>
    <recommendedName>
        <fullName evidence="1">Glutamyl-tRNA(Gln) amidotransferase subunit A</fullName>
        <shortName evidence="1">Glu-ADT subunit A</shortName>
        <ecNumber evidence="1">6.3.5.7</ecNumber>
    </recommendedName>
</protein>
<evidence type="ECO:0000255" key="1">
    <source>
        <dbReference type="HAMAP-Rule" id="MF_00120"/>
    </source>
</evidence>
<accession>Q65MP8</accession>
<accession>Q62Y42</accession>
<sequence>MSLFDHKISELKRLIHNKEISISDLVDESYKRIHEVDGKVQAFLQLDEEKARAYAKELDEALDTRDEHGLLFGMPIGIKDNIVTKDLRTTCASKILENFDPIYDATVVERLHEAEAVTIGKLNMDEFAMGSSTENSGFKKTKNPWNLETVPGGSSGGSAAAVAAGEVPFSLGSDTGGSIRQPASFCGVVGLKPTYGRVSRYGLVAFASSLDQIGPITRSVEDNAYLLQAISGVDKMDSTSANVDVPDYLSALTGDIKGLKIAVPKEYLGEGVSEEAKQSVLEALKVLESLGATWEEVSLPHSKYALATYYLLSSSEASANLARFDGIRYGYRTDNADNLIDLYKQTRSEGFGNEVKRRIMLGTFALSSGYYDAYYKKAQKVRTLIKKDFEDVFANYDVIIGPTTPTPAFKIGEKTSDPLTMYANDILTIPVNLAGVPGISVPCGFANGLPLGLQIIGKHFDESTVYRVAHAFEQATDHHKAKPEL</sequence>
<name>GATA_BACLD</name>
<comment type="function">
    <text evidence="1">Allows the formation of correctly charged Gln-tRNA(Gln) through the transamidation of misacylated Glu-tRNA(Gln) in organisms which lack glutaminyl-tRNA synthetase. The reaction takes place in the presence of glutamine and ATP through an activated gamma-phospho-Glu-tRNA(Gln).</text>
</comment>
<comment type="catalytic activity">
    <reaction evidence="1">
        <text>L-glutamyl-tRNA(Gln) + L-glutamine + ATP + H2O = L-glutaminyl-tRNA(Gln) + L-glutamate + ADP + phosphate + H(+)</text>
        <dbReference type="Rhea" id="RHEA:17521"/>
        <dbReference type="Rhea" id="RHEA-COMP:9681"/>
        <dbReference type="Rhea" id="RHEA-COMP:9684"/>
        <dbReference type="ChEBI" id="CHEBI:15377"/>
        <dbReference type="ChEBI" id="CHEBI:15378"/>
        <dbReference type="ChEBI" id="CHEBI:29985"/>
        <dbReference type="ChEBI" id="CHEBI:30616"/>
        <dbReference type="ChEBI" id="CHEBI:43474"/>
        <dbReference type="ChEBI" id="CHEBI:58359"/>
        <dbReference type="ChEBI" id="CHEBI:78520"/>
        <dbReference type="ChEBI" id="CHEBI:78521"/>
        <dbReference type="ChEBI" id="CHEBI:456216"/>
        <dbReference type="EC" id="6.3.5.7"/>
    </reaction>
</comment>
<comment type="subunit">
    <text evidence="1">Heterotrimer of A, B and C subunits.</text>
</comment>
<comment type="similarity">
    <text evidence="1">Belongs to the amidase family. GatA subfamily.</text>
</comment>
<proteinExistence type="inferred from homology"/>
<reference key="1">
    <citation type="journal article" date="2004" name="J. Mol. Microbiol. Biotechnol.">
        <title>The complete genome sequence of Bacillus licheniformis DSM13, an organism with great industrial potential.</title>
        <authorList>
            <person name="Veith B."/>
            <person name="Herzberg C."/>
            <person name="Steckel S."/>
            <person name="Feesche J."/>
            <person name="Maurer K.H."/>
            <person name="Ehrenreich P."/>
            <person name="Baeumer S."/>
            <person name="Henne A."/>
            <person name="Liesegang H."/>
            <person name="Merkl R."/>
            <person name="Ehrenreich A."/>
            <person name="Gottschalk G."/>
        </authorList>
    </citation>
    <scope>NUCLEOTIDE SEQUENCE [LARGE SCALE GENOMIC DNA]</scope>
    <source>
        <strain>ATCC 14580 / DSM 13 / JCM 2505 / CCUG 7422 / NBRC 12200 / NCIMB 9375 / NCTC 10341 / NRRL NRS-1264 / Gibson 46</strain>
    </source>
</reference>
<reference key="2">
    <citation type="journal article" date="2004" name="Genome Biol.">
        <title>Complete genome sequence of the industrial bacterium Bacillus licheniformis and comparisons with closely related Bacillus species.</title>
        <authorList>
            <person name="Rey M.W."/>
            <person name="Ramaiya P."/>
            <person name="Nelson B.A."/>
            <person name="Brody-Karpin S.D."/>
            <person name="Zaretsky E.J."/>
            <person name="Tang M."/>
            <person name="Lopez de Leon A."/>
            <person name="Xiang H."/>
            <person name="Gusti V."/>
            <person name="Clausen I.G."/>
            <person name="Olsen P.B."/>
            <person name="Rasmussen M.D."/>
            <person name="Andersen J.T."/>
            <person name="Joergensen P.L."/>
            <person name="Larsen T.S."/>
            <person name="Sorokin A."/>
            <person name="Bolotin A."/>
            <person name="Lapidus A."/>
            <person name="Galleron N."/>
            <person name="Ehrlich S.D."/>
            <person name="Berka R.M."/>
        </authorList>
    </citation>
    <scope>NUCLEOTIDE SEQUENCE [LARGE SCALE GENOMIC DNA]</scope>
    <source>
        <strain>ATCC 14580 / DSM 13 / JCM 2505 / CCUG 7422 / NBRC 12200 / NCIMB 9375 / NCTC 10341 / NRRL NRS-1264 / Gibson 46</strain>
    </source>
</reference>
<keyword id="KW-0067">ATP-binding</keyword>
<keyword id="KW-0436">Ligase</keyword>
<keyword id="KW-0547">Nucleotide-binding</keyword>
<keyword id="KW-0648">Protein biosynthesis</keyword>
<keyword id="KW-1185">Reference proteome</keyword>
<feature type="chain" id="PRO_0000241071" description="Glutamyl-tRNA(Gln) amidotransferase subunit A">
    <location>
        <begin position="1"/>
        <end position="485"/>
    </location>
</feature>
<feature type="active site" description="Charge relay system" evidence="1">
    <location>
        <position position="79"/>
    </location>
</feature>
<feature type="active site" description="Charge relay system" evidence="1">
    <location>
        <position position="154"/>
    </location>
</feature>
<feature type="active site" description="Acyl-ester intermediate" evidence="1">
    <location>
        <position position="178"/>
    </location>
</feature>